<protein>
    <recommendedName>
        <fullName evidence="1">tRNA-2-methylthio-N(6)-dimethylallyladenosine synthase</fullName>
        <ecNumber evidence="1">2.8.4.3</ecNumber>
    </recommendedName>
    <alternativeName>
        <fullName evidence="1">(Dimethylallyl)adenosine tRNA methylthiotransferase MiaB</fullName>
    </alternativeName>
    <alternativeName>
        <fullName evidence="1">tRNA-i(6)A37 methylthiotransferase</fullName>
    </alternativeName>
</protein>
<accession>Q5NH53</accession>
<dbReference type="EC" id="2.8.4.3" evidence="1"/>
<dbReference type="EMBL" id="AJ749949">
    <property type="protein sequence ID" value="CAG45251.1"/>
    <property type="molecule type" value="Genomic_DNA"/>
</dbReference>
<dbReference type="RefSeq" id="WP_003023392.1">
    <property type="nucleotide sequence ID" value="NZ_CP010290.1"/>
</dbReference>
<dbReference type="RefSeq" id="YP_169639.1">
    <property type="nucleotide sequence ID" value="NC_006570.2"/>
</dbReference>
<dbReference type="SMR" id="Q5NH53"/>
<dbReference type="IntAct" id="Q5NH53">
    <property type="interactions" value="1"/>
</dbReference>
<dbReference type="STRING" id="177416.FTT_0618c"/>
<dbReference type="DNASU" id="3192397"/>
<dbReference type="EnsemblBacteria" id="CAG45251">
    <property type="protein sequence ID" value="CAG45251"/>
    <property type="gene ID" value="FTT_0618c"/>
</dbReference>
<dbReference type="GeneID" id="75265204"/>
<dbReference type="KEGG" id="ftu:FTT_0618c"/>
<dbReference type="eggNOG" id="COG0621">
    <property type="taxonomic scope" value="Bacteria"/>
</dbReference>
<dbReference type="OrthoDB" id="9805215at2"/>
<dbReference type="Proteomes" id="UP000001174">
    <property type="component" value="Chromosome"/>
</dbReference>
<dbReference type="GO" id="GO:0005829">
    <property type="term" value="C:cytosol"/>
    <property type="evidence" value="ECO:0007669"/>
    <property type="project" value="TreeGrafter"/>
</dbReference>
<dbReference type="GO" id="GO:0051539">
    <property type="term" value="F:4 iron, 4 sulfur cluster binding"/>
    <property type="evidence" value="ECO:0007669"/>
    <property type="project" value="UniProtKB-UniRule"/>
</dbReference>
<dbReference type="GO" id="GO:0046872">
    <property type="term" value="F:metal ion binding"/>
    <property type="evidence" value="ECO:0007669"/>
    <property type="project" value="UniProtKB-KW"/>
</dbReference>
<dbReference type="GO" id="GO:0035597">
    <property type="term" value="F:N6-isopentenyladenosine methylthiotransferase activity"/>
    <property type="evidence" value="ECO:0007669"/>
    <property type="project" value="TreeGrafter"/>
</dbReference>
<dbReference type="CDD" id="cd01335">
    <property type="entry name" value="Radical_SAM"/>
    <property type="match status" value="1"/>
</dbReference>
<dbReference type="FunFam" id="3.40.50.12160:FF:000001">
    <property type="entry name" value="tRNA-2-methylthio-N(6)-dimethylallyladenosine synthase"/>
    <property type="match status" value="1"/>
</dbReference>
<dbReference type="FunFam" id="3.80.30.20:FF:000001">
    <property type="entry name" value="tRNA-2-methylthio-N(6)-dimethylallyladenosine synthase 2"/>
    <property type="match status" value="1"/>
</dbReference>
<dbReference type="Gene3D" id="3.40.50.12160">
    <property type="entry name" value="Methylthiotransferase, N-terminal domain"/>
    <property type="match status" value="1"/>
</dbReference>
<dbReference type="Gene3D" id="3.80.30.20">
    <property type="entry name" value="tm_1862 like domain"/>
    <property type="match status" value="1"/>
</dbReference>
<dbReference type="HAMAP" id="MF_01864">
    <property type="entry name" value="tRNA_metthiotr_MiaB"/>
    <property type="match status" value="1"/>
</dbReference>
<dbReference type="InterPro" id="IPR006638">
    <property type="entry name" value="Elp3/MiaA/NifB-like_rSAM"/>
</dbReference>
<dbReference type="InterPro" id="IPR005839">
    <property type="entry name" value="Methylthiotransferase"/>
</dbReference>
<dbReference type="InterPro" id="IPR020612">
    <property type="entry name" value="Methylthiotransferase_CS"/>
</dbReference>
<dbReference type="InterPro" id="IPR013848">
    <property type="entry name" value="Methylthiotransferase_N"/>
</dbReference>
<dbReference type="InterPro" id="IPR038135">
    <property type="entry name" value="Methylthiotransferase_N_sf"/>
</dbReference>
<dbReference type="InterPro" id="IPR006463">
    <property type="entry name" value="MiaB_methiolase"/>
</dbReference>
<dbReference type="InterPro" id="IPR007197">
    <property type="entry name" value="rSAM"/>
</dbReference>
<dbReference type="InterPro" id="IPR023404">
    <property type="entry name" value="rSAM_horseshoe"/>
</dbReference>
<dbReference type="InterPro" id="IPR002792">
    <property type="entry name" value="TRAM_dom"/>
</dbReference>
<dbReference type="NCBIfam" id="TIGR01574">
    <property type="entry name" value="miaB-methiolase"/>
    <property type="match status" value="1"/>
</dbReference>
<dbReference type="NCBIfam" id="TIGR00089">
    <property type="entry name" value="MiaB/RimO family radical SAM methylthiotransferase"/>
    <property type="match status" value="1"/>
</dbReference>
<dbReference type="PANTHER" id="PTHR43020">
    <property type="entry name" value="CDK5 REGULATORY SUBUNIT-ASSOCIATED PROTEIN 1"/>
    <property type="match status" value="1"/>
</dbReference>
<dbReference type="PANTHER" id="PTHR43020:SF2">
    <property type="entry name" value="MITOCHONDRIAL TRNA METHYLTHIOTRANSFERASE CDK5RAP1"/>
    <property type="match status" value="1"/>
</dbReference>
<dbReference type="Pfam" id="PF04055">
    <property type="entry name" value="Radical_SAM"/>
    <property type="match status" value="1"/>
</dbReference>
<dbReference type="Pfam" id="PF01938">
    <property type="entry name" value="TRAM"/>
    <property type="match status" value="1"/>
</dbReference>
<dbReference type="Pfam" id="PF00919">
    <property type="entry name" value="UPF0004"/>
    <property type="match status" value="1"/>
</dbReference>
<dbReference type="SFLD" id="SFLDF00273">
    <property type="entry name" value="(dimethylallyl)adenosine_tRNA"/>
    <property type="match status" value="1"/>
</dbReference>
<dbReference type="SFLD" id="SFLDG01082">
    <property type="entry name" value="B12-binding_domain_containing"/>
    <property type="match status" value="1"/>
</dbReference>
<dbReference type="SFLD" id="SFLDS00029">
    <property type="entry name" value="Radical_SAM"/>
    <property type="match status" value="1"/>
</dbReference>
<dbReference type="SMART" id="SM00729">
    <property type="entry name" value="Elp3"/>
    <property type="match status" value="1"/>
</dbReference>
<dbReference type="SUPFAM" id="SSF102114">
    <property type="entry name" value="Radical SAM enzymes"/>
    <property type="match status" value="1"/>
</dbReference>
<dbReference type="PROSITE" id="PS51449">
    <property type="entry name" value="MTTASE_N"/>
    <property type="match status" value="1"/>
</dbReference>
<dbReference type="PROSITE" id="PS01278">
    <property type="entry name" value="MTTASE_RADICAL"/>
    <property type="match status" value="1"/>
</dbReference>
<dbReference type="PROSITE" id="PS51918">
    <property type="entry name" value="RADICAL_SAM"/>
    <property type="match status" value="1"/>
</dbReference>
<dbReference type="PROSITE" id="PS50926">
    <property type="entry name" value="TRAM"/>
    <property type="match status" value="1"/>
</dbReference>
<comment type="function">
    <text evidence="1">Catalyzes the methylthiolation of N6-(dimethylallyl)adenosine (i(6)A), leading to the formation of 2-methylthio-N6-(dimethylallyl)adenosine (ms(2)i(6)A) at position 37 in tRNAs that read codons beginning with uridine.</text>
</comment>
<comment type="catalytic activity">
    <reaction evidence="1">
        <text>N(6)-dimethylallyladenosine(37) in tRNA + (sulfur carrier)-SH + AH2 + 2 S-adenosyl-L-methionine = 2-methylsulfanyl-N(6)-dimethylallyladenosine(37) in tRNA + (sulfur carrier)-H + 5'-deoxyadenosine + L-methionine + A + S-adenosyl-L-homocysteine + 2 H(+)</text>
        <dbReference type="Rhea" id="RHEA:37067"/>
        <dbReference type="Rhea" id="RHEA-COMP:10375"/>
        <dbReference type="Rhea" id="RHEA-COMP:10376"/>
        <dbReference type="Rhea" id="RHEA-COMP:14737"/>
        <dbReference type="Rhea" id="RHEA-COMP:14739"/>
        <dbReference type="ChEBI" id="CHEBI:13193"/>
        <dbReference type="ChEBI" id="CHEBI:15378"/>
        <dbReference type="ChEBI" id="CHEBI:17319"/>
        <dbReference type="ChEBI" id="CHEBI:17499"/>
        <dbReference type="ChEBI" id="CHEBI:29917"/>
        <dbReference type="ChEBI" id="CHEBI:57844"/>
        <dbReference type="ChEBI" id="CHEBI:57856"/>
        <dbReference type="ChEBI" id="CHEBI:59789"/>
        <dbReference type="ChEBI" id="CHEBI:64428"/>
        <dbReference type="ChEBI" id="CHEBI:74415"/>
        <dbReference type="ChEBI" id="CHEBI:74417"/>
        <dbReference type="EC" id="2.8.4.3"/>
    </reaction>
</comment>
<comment type="cofactor">
    <cofactor evidence="1">
        <name>[4Fe-4S] cluster</name>
        <dbReference type="ChEBI" id="CHEBI:49883"/>
    </cofactor>
    <text evidence="1">Binds 2 [4Fe-4S] clusters. One cluster is coordinated with 3 cysteines and an exchangeable S-adenosyl-L-methionine.</text>
</comment>
<comment type="subunit">
    <text evidence="1">Monomer.</text>
</comment>
<comment type="subcellular location">
    <subcellularLocation>
        <location evidence="1">Cytoplasm</location>
    </subcellularLocation>
</comment>
<comment type="similarity">
    <text evidence="1">Belongs to the methylthiotransferase family. MiaB subfamily.</text>
</comment>
<keyword id="KW-0004">4Fe-4S</keyword>
<keyword id="KW-0963">Cytoplasm</keyword>
<keyword id="KW-0408">Iron</keyword>
<keyword id="KW-0411">Iron-sulfur</keyword>
<keyword id="KW-0479">Metal-binding</keyword>
<keyword id="KW-1185">Reference proteome</keyword>
<keyword id="KW-0949">S-adenosyl-L-methionine</keyword>
<keyword id="KW-0808">Transferase</keyword>
<keyword id="KW-0819">tRNA processing</keyword>
<feature type="chain" id="PRO_0000374308" description="tRNA-2-methylthio-N(6)-dimethylallyladenosine synthase">
    <location>
        <begin position="1"/>
        <end position="442"/>
    </location>
</feature>
<feature type="domain" description="MTTase N-terminal" evidence="1">
    <location>
        <begin position="5"/>
        <end position="122"/>
    </location>
</feature>
<feature type="domain" description="Radical SAM core" evidence="2">
    <location>
        <begin position="145"/>
        <end position="378"/>
    </location>
</feature>
<feature type="domain" description="TRAM" evidence="1">
    <location>
        <begin position="380"/>
        <end position="442"/>
    </location>
</feature>
<feature type="binding site" evidence="1">
    <location>
        <position position="14"/>
    </location>
    <ligand>
        <name>[4Fe-4S] cluster</name>
        <dbReference type="ChEBI" id="CHEBI:49883"/>
        <label>1</label>
    </ligand>
</feature>
<feature type="binding site" evidence="1">
    <location>
        <position position="51"/>
    </location>
    <ligand>
        <name>[4Fe-4S] cluster</name>
        <dbReference type="ChEBI" id="CHEBI:49883"/>
        <label>1</label>
    </ligand>
</feature>
<feature type="binding site" evidence="1">
    <location>
        <position position="85"/>
    </location>
    <ligand>
        <name>[4Fe-4S] cluster</name>
        <dbReference type="ChEBI" id="CHEBI:49883"/>
        <label>1</label>
    </ligand>
</feature>
<feature type="binding site" evidence="1">
    <location>
        <position position="159"/>
    </location>
    <ligand>
        <name>[4Fe-4S] cluster</name>
        <dbReference type="ChEBI" id="CHEBI:49883"/>
        <label>2</label>
        <note>4Fe-4S-S-AdoMet</note>
    </ligand>
</feature>
<feature type="binding site" evidence="1">
    <location>
        <position position="163"/>
    </location>
    <ligand>
        <name>[4Fe-4S] cluster</name>
        <dbReference type="ChEBI" id="CHEBI:49883"/>
        <label>2</label>
        <note>4Fe-4S-S-AdoMet</note>
    </ligand>
</feature>
<feature type="binding site" evidence="1">
    <location>
        <position position="166"/>
    </location>
    <ligand>
        <name>[4Fe-4S] cluster</name>
        <dbReference type="ChEBI" id="CHEBI:49883"/>
        <label>2</label>
        <note>4Fe-4S-S-AdoMet</note>
    </ligand>
</feature>
<gene>
    <name evidence="1" type="primary">miaB</name>
    <name type="ordered locus">FTT_0618c</name>
</gene>
<organism>
    <name type="scientific">Francisella tularensis subsp. tularensis (strain SCHU S4 / Schu 4)</name>
    <dbReference type="NCBI Taxonomy" id="177416"/>
    <lineage>
        <taxon>Bacteria</taxon>
        <taxon>Pseudomonadati</taxon>
        <taxon>Pseudomonadota</taxon>
        <taxon>Gammaproteobacteria</taxon>
        <taxon>Thiotrichales</taxon>
        <taxon>Francisellaceae</taxon>
        <taxon>Francisella</taxon>
    </lineage>
</organism>
<name>MIAB_FRATT</name>
<evidence type="ECO:0000255" key="1">
    <source>
        <dbReference type="HAMAP-Rule" id="MF_01864"/>
    </source>
</evidence>
<evidence type="ECO:0000255" key="2">
    <source>
        <dbReference type="PROSITE-ProRule" id="PRU01266"/>
    </source>
</evidence>
<reference key="1">
    <citation type="journal article" date="2005" name="Nat. Genet.">
        <title>The complete genome sequence of Francisella tularensis, the causative agent of tularemia.</title>
        <authorList>
            <person name="Larsson P."/>
            <person name="Oyston P.C.F."/>
            <person name="Chain P."/>
            <person name="Chu M.C."/>
            <person name="Duffield M."/>
            <person name="Fuxelius H.-H."/>
            <person name="Garcia E."/>
            <person name="Haelltorp G."/>
            <person name="Johansson D."/>
            <person name="Isherwood K.E."/>
            <person name="Karp P.D."/>
            <person name="Larsson E."/>
            <person name="Liu Y."/>
            <person name="Michell S."/>
            <person name="Prior J."/>
            <person name="Prior R."/>
            <person name="Malfatti S."/>
            <person name="Sjoestedt A."/>
            <person name="Svensson K."/>
            <person name="Thompson N."/>
            <person name="Vergez L."/>
            <person name="Wagg J.K."/>
            <person name="Wren B.W."/>
            <person name="Lindler L.E."/>
            <person name="Andersson S.G.E."/>
            <person name="Forsman M."/>
            <person name="Titball R.W."/>
        </authorList>
    </citation>
    <scope>NUCLEOTIDE SEQUENCE [LARGE SCALE GENOMIC DNA]</scope>
    <source>
        <strain>SCHU S4 / Schu 4</strain>
    </source>
</reference>
<sequence>MKEQKKVFIKTLGCQMNEYDSARMHEVLNEHFDTVKTDDYKDADIILINTCSIREKAQEKVFHELGRWKGLKKTNEDLIIGVGGCVASQEGENIIKRAPFVDLVFGPQTIHRLPEMIKQKQKTQQSQVDISFPEVEKFDYLPEPKAEGAKAYVSIMEGCDKYCSYCVVPYTRGPEVNRPFEDVLAECAILAEQGVKEITLLGQNVNHYLGPMENGQTADLALLIHFIAEIDGIERIRFTTSHPVEFSQNLIDAYATVPELANHLHLPVQHGSDRILINMKRNHTILEFKQKIRKLRAIRPDITISSDFIVGFPGETEEDFQKLLDLVKEINFDQSFSFIYSKRPGTPAADLPDDTPMEVKKDRLKRLQDLLNSNAQIISRQMVGTNQRILVDGTSKKDDNILSGRTENNRVVNFKGDKSLIGQFAMVKITESLPNSLRGELI</sequence>
<proteinExistence type="inferred from homology"/>